<proteinExistence type="evidence at transcript level"/>
<gene>
    <name type="primary">Sec61a2</name>
</gene>
<name>S61A2_MOUSE</name>
<dbReference type="EMBL" id="AF145254">
    <property type="protein sequence ID" value="AAF66696.1"/>
    <property type="molecule type" value="mRNA"/>
</dbReference>
<dbReference type="EMBL" id="AF222748">
    <property type="protein sequence ID" value="AAG44253.1"/>
    <property type="molecule type" value="mRNA"/>
</dbReference>
<dbReference type="EMBL" id="AK077701">
    <property type="protein sequence ID" value="BAC36967.1"/>
    <property type="molecule type" value="mRNA"/>
</dbReference>
<dbReference type="EMBL" id="BC005458">
    <property type="protein sequence ID" value="AAH05458.1"/>
    <property type="molecule type" value="mRNA"/>
</dbReference>
<dbReference type="CCDS" id="CCDS15668.1"/>
<dbReference type="RefSeq" id="NP_067280.1">
    <property type="nucleotide sequence ID" value="NM_021305.5"/>
</dbReference>
<dbReference type="SMR" id="Q9JLR1"/>
<dbReference type="FunCoup" id="Q9JLR1">
    <property type="interactions" value="1614"/>
</dbReference>
<dbReference type="STRING" id="10090.ENSMUSP00000100046"/>
<dbReference type="iPTMnet" id="Q9JLR1"/>
<dbReference type="PhosphoSitePlus" id="Q9JLR1"/>
<dbReference type="SwissPalm" id="Q9JLR1"/>
<dbReference type="jPOST" id="Q9JLR1"/>
<dbReference type="PaxDb" id="10090-ENSMUSP00000100046"/>
<dbReference type="PeptideAtlas" id="Q9JLR1"/>
<dbReference type="ProteomicsDB" id="256906"/>
<dbReference type="Pumba" id="Q9JLR1"/>
<dbReference type="Antibodypedia" id="71451">
    <property type="antibodies" value="12 antibodies from 9 providers"/>
</dbReference>
<dbReference type="DNASU" id="57743"/>
<dbReference type="Ensembl" id="ENSMUST00000102981.10">
    <property type="protein sequence ID" value="ENSMUSP00000100046.4"/>
    <property type="gene ID" value="ENSMUSG00000025816.16"/>
</dbReference>
<dbReference type="GeneID" id="57743"/>
<dbReference type="KEGG" id="mmu:57743"/>
<dbReference type="UCSC" id="uc008ifx.1">
    <property type="organism name" value="mouse"/>
</dbReference>
<dbReference type="AGR" id="MGI:1931071"/>
<dbReference type="CTD" id="55176"/>
<dbReference type="MGI" id="MGI:1931071">
    <property type="gene designation" value="Sec61a2"/>
</dbReference>
<dbReference type="VEuPathDB" id="HostDB:ENSMUSG00000025816"/>
<dbReference type="eggNOG" id="KOG1373">
    <property type="taxonomic scope" value="Eukaryota"/>
</dbReference>
<dbReference type="GeneTree" id="ENSGT00390000003721"/>
<dbReference type="HOGENOM" id="CLU_031763_2_0_1"/>
<dbReference type="InParanoid" id="Q9JLR1"/>
<dbReference type="OMA" id="XLFVAGL"/>
<dbReference type="OrthoDB" id="420669at2759"/>
<dbReference type="PhylomeDB" id="Q9JLR1"/>
<dbReference type="TreeFam" id="TF300348"/>
<dbReference type="BioGRID-ORCS" id="57743">
    <property type="hits" value="0 hits in 76 CRISPR screens"/>
</dbReference>
<dbReference type="ChiTaRS" id="Sec61a2">
    <property type="organism name" value="mouse"/>
</dbReference>
<dbReference type="PRO" id="PR:Q9JLR1"/>
<dbReference type="Proteomes" id="UP000000589">
    <property type="component" value="Chromosome 2"/>
</dbReference>
<dbReference type="RNAct" id="Q9JLR1">
    <property type="molecule type" value="protein"/>
</dbReference>
<dbReference type="Bgee" id="ENSMUSG00000025816">
    <property type="expression patterns" value="Expressed in entorhinal cortex and 258 other cell types or tissues"/>
</dbReference>
<dbReference type="ExpressionAtlas" id="Q9JLR1">
    <property type="expression patterns" value="baseline and differential"/>
</dbReference>
<dbReference type="GO" id="GO:0005789">
    <property type="term" value="C:endoplasmic reticulum membrane"/>
    <property type="evidence" value="ECO:0007669"/>
    <property type="project" value="UniProtKB-SubCell"/>
</dbReference>
<dbReference type="GO" id="GO:0043022">
    <property type="term" value="F:ribosome binding"/>
    <property type="evidence" value="ECO:0000314"/>
    <property type="project" value="MGI"/>
</dbReference>
<dbReference type="GO" id="GO:0015031">
    <property type="term" value="P:protein transport"/>
    <property type="evidence" value="ECO:0007669"/>
    <property type="project" value="UniProtKB-KW"/>
</dbReference>
<dbReference type="FunFam" id="1.10.3370.10:FF:000002">
    <property type="entry name" value="Transport Sec61 subunit alpha isoform 2"/>
    <property type="match status" value="1"/>
</dbReference>
<dbReference type="Gene3D" id="1.10.3370.10">
    <property type="entry name" value="SecY subunit domain"/>
    <property type="match status" value="1"/>
</dbReference>
<dbReference type="InterPro" id="IPR002208">
    <property type="entry name" value="SecY/SEC61-alpha"/>
</dbReference>
<dbReference type="InterPro" id="IPR030659">
    <property type="entry name" value="SecY_CS"/>
</dbReference>
<dbReference type="InterPro" id="IPR023201">
    <property type="entry name" value="SecY_dom_sf"/>
</dbReference>
<dbReference type="InterPro" id="IPR019561">
    <property type="entry name" value="Translocon_Sec61/SecY_plug_dom"/>
</dbReference>
<dbReference type="NCBIfam" id="TIGR00967">
    <property type="entry name" value="3a0501s007"/>
    <property type="match status" value="1"/>
</dbReference>
<dbReference type="NCBIfam" id="NF006341">
    <property type="entry name" value="PRK08568.1-5"/>
    <property type="match status" value="1"/>
</dbReference>
<dbReference type="PANTHER" id="PTHR10906">
    <property type="entry name" value="SECY/SEC61-ALPHA FAMILY MEMBER"/>
    <property type="match status" value="1"/>
</dbReference>
<dbReference type="Pfam" id="PF10559">
    <property type="entry name" value="Plug_translocon"/>
    <property type="match status" value="1"/>
</dbReference>
<dbReference type="Pfam" id="PF00344">
    <property type="entry name" value="SecY"/>
    <property type="match status" value="1"/>
</dbReference>
<dbReference type="PIRSF" id="PIRSF004557">
    <property type="entry name" value="SecY"/>
    <property type="match status" value="1"/>
</dbReference>
<dbReference type="SUPFAM" id="SSF103491">
    <property type="entry name" value="Preprotein translocase SecY subunit"/>
    <property type="match status" value="1"/>
</dbReference>
<dbReference type="PROSITE" id="PS00755">
    <property type="entry name" value="SECY_1"/>
    <property type="match status" value="1"/>
</dbReference>
<dbReference type="PROSITE" id="PS00756">
    <property type="entry name" value="SECY_2"/>
    <property type="match status" value="1"/>
</dbReference>
<feature type="chain" id="PRO_0000131796" description="Protein transport protein Sec61 subunit alpha isoform 2">
    <location>
        <begin position="1"/>
        <end position="476"/>
    </location>
</feature>
<feature type="topological domain" description="Cytoplasmic" evidence="3">
    <location>
        <begin position="1"/>
        <end position="33"/>
    </location>
</feature>
<feature type="transmembrane region" description="Helical" evidence="3">
    <location>
        <begin position="34"/>
        <end position="53"/>
    </location>
</feature>
<feature type="topological domain" description="Lumenal" evidence="3">
    <location>
        <begin position="54"/>
        <end position="76"/>
    </location>
</feature>
<feature type="transmembrane region" description="Helical" evidence="3">
    <location>
        <begin position="77"/>
        <end position="96"/>
    </location>
</feature>
<feature type="topological domain" description="Cytoplasmic" evidence="3">
    <location>
        <begin position="97"/>
        <end position="117"/>
    </location>
</feature>
<feature type="transmembrane region" description="Helical" evidence="3">
    <location>
        <begin position="118"/>
        <end position="138"/>
    </location>
</feature>
<feature type="topological domain" description="Lumenal" evidence="3">
    <location>
        <begin position="139"/>
        <end position="144"/>
    </location>
</feature>
<feature type="transmembrane region" description="Helical" evidence="3">
    <location>
        <begin position="145"/>
        <end position="165"/>
    </location>
</feature>
<feature type="topological domain" description="Cytoplasmic" evidence="3">
    <location>
        <begin position="166"/>
        <end position="172"/>
    </location>
</feature>
<feature type="transmembrane region" description="Helical" evidence="3">
    <location>
        <begin position="173"/>
        <end position="193"/>
    </location>
</feature>
<feature type="topological domain" description="Lumenal" evidence="3">
    <location>
        <begin position="194"/>
        <end position="240"/>
    </location>
</feature>
<feature type="transmembrane region" description="Helical" evidence="3">
    <location>
        <begin position="241"/>
        <end position="261"/>
    </location>
</feature>
<feature type="topological domain" description="Cytoplasmic" evidence="3">
    <location>
        <begin position="262"/>
        <end position="288"/>
    </location>
</feature>
<feature type="transmembrane region" description="Helical" evidence="3">
    <location>
        <begin position="289"/>
        <end position="309"/>
    </location>
</feature>
<feature type="topological domain" description="Lumenal" evidence="3">
    <location>
        <begin position="310"/>
        <end position="354"/>
    </location>
</feature>
<feature type="transmembrane region" description="Helical" evidence="3">
    <location>
        <begin position="355"/>
        <end position="375"/>
    </location>
</feature>
<feature type="topological domain" description="Cytoplasmic" evidence="3">
    <location>
        <begin position="376"/>
        <end position="420"/>
    </location>
</feature>
<feature type="transmembrane region" description="Helical" evidence="3">
    <location>
        <begin position="421"/>
        <end position="441"/>
    </location>
</feature>
<feature type="topological domain" description="Lumenal" evidence="3">
    <location>
        <begin position="442"/>
        <end position="445"/>
    </location>
</feature>
<feature type="transmembrane region" description="Helical" evidence="3">
    <location>
        <begin position="446"/>
        <end position="462"/>
    </location>
</feature>
<feature type="topological domain" description="Cytoplasmic" evidence="3">
    <location>
        <begin position="463"/>
        <end position="476"/>
    </location>
</feature>
<accession>Q9JLR1</accession>
<sequence length="476" mass="52248">MGIKFLEVIKPFCAVLPEIQKPERKIQFREKVLWTAITLFIFLVCCQIPLFGIMSSDSADPFYWMRVILASNRGTLMELGISPIVTSGLIMQLLAGAKIIEVGDTPKDRALFNGAQKLFGMIITIGQAIVYVMTGMYGDPAEMGAGICLLIIIQLFVAGLIVLLLDELLQKGYGLGSGISLFIATNICETIVWKAFSPTTINTGRGTEFEGAVIALFHLLATRTDKVRALREAFYRQNLPNLMNLIATVFVFAVVIYFQGFRVDLPIKSARYRGQYSSYPIKLFYTSNIPIILQSALVSNLYVISQMLSVRFSGNFLVNLLGQWADVSGGGPARSYPVGGLCYYLSPPESMGAIFEDPVHVVVYIIFMLGSCAFFSKTWIEVSGSSAKDVAKQLKEQQMVMRGHRDTSMVHELNRYIPTAAAFGGLCIGALSVLADFLGAIGSGTGILLAVTIIYQYFEIFVKEQAEVGGMGALFF</sequence>
<organism>
    <name type="scientific">Mus musculus</name>
    <name type="common">Mouse</name>
    <dbReference type="NCBI Taxonomy" id="10090"/>
    <lineage>
        <taxon>Eukaryota</taxon>
        <taxon>Metazoa</taxon>
        <taxon>Chordata</taxon>
        <taxon>Craniata</taxon>
        <taxon>Vertebrata</taxon>
        <taxon>Euteleostomi</taxon>
        <taxon>Mammalia</taxon>
        <taxon>Eutheria</taxon>
        <taxon>Euarchontoglires</taxon>
        <taxon>Glires</taxon>
        <taxon>Rodentia</taxon>
        <taxon>Myomorpha</taxon>
        <taxon>Muroidea</taxon>
        <taxon>Muridae</taxon>
        <taxon>Murinae</taxon>
        <taxon>Mus</taxon>
        <taxon>Mus</taxon>
    </lineage>
</organism>
<evidence type="ECO:0000250" key="1">
    <source>
        <dbReference type="UniProtKB" id="P38377"/>
    </source>
</evidence>
<evidence type="ECO:0000250" key="2">
    <source>
        <dbReference type="UniProtKB" id="P61619"/>
    </source>
</evidence>
<evidence type="ECO:0000255" key="3"/>
<evidence type="ECO:0000305" key="4"/>
<protein>
    <recommendedName>
        <fullName>Protein transport protein Sec61 subunit alpha isoform 2</fullName>
        <shortName>Sec61 alpha-2</shortName>
    </recommendedName>
</protein>
<reference key="1">
    <citation type="submission" date="1999-04" db="EMBL/GenBank/DDBJ databases">
        <title>Sec61 alpha isoforms.</title>
        <authorList>
            <person name="Finke K."/>
            <person name="Prehn S."/>
            <person name="Hartmann E."/>
        </authorList>
    </citation>
    <scope>NUCLEOTIDE SEQUENCE [MRNA]</scope>
</reference>
<reference key="2">
    <citation type="journal article" date="2005" name="Science">
        <title>The transcriptional landscape of the mammalian genome.</title>
        <authorList>
            <person name="Carninci P."/>
            <person name="Kasukawa T."/>
            <person name="Katayama S."/>
            <person name="Gough J."/>
            <person name="Frith M.C."/>
            <person name="Maeda N."/>
            <person name="Oyama R."/>
            <person name="Ravasi T."/>
            <person name="Lenhard B."/>
            <person name="Wells C."/>
            <person name="Kodzius R."/>
            <person name="Shimokawa K."/>
            <person name="Bajic V.B."/>
            <person name="Brenner S.E."/>
            <person name="Batalov S."/>
            <person name="Forrest A.R."/>
            <person name="Zavolan M."/>
            <person name="Davis M.J."/>
            <person name="Wilming L.G."/>
            <person name="Aidinis V."/>
            <person name="Allen J.E."/>
            <person name="Ambesi-Impiombato A."/>
            <person name="Apweiler R."/>
            <person name="Aturaliya R.N."/>
            <person name="Bailey T.L."/>
            <person name="Bansal M."/>
            <person name="Baxter L."/>
            <person name="Beisel K.W."/>
            <person name="Bersano T."/>
            <person name="Bono H."/>
            <person name="Chalk A.M."/>
            <person name="Chiu K.P."/>
            <person name="Choudhary V."/>
            <person name="Christoffels A."/>
            <person name="Clutterbuck D.R."/>
            <person name="Crowe M.L."/>
            <person name="Dalla E."/>
            <person name="Dalrymple B.P."/>
            <person name="de Bono B."/>
            <person name="Della Gatta G."/>
            <person name="di Bernardo D."/>
            <person name="Down T."/>
            <person name="Engstrom P."/>
            <person name="Fagiolini M."/>
            <person name="Faulkner G."/>
            <person name="Fletcher C.F."/>
            <person name="Fukushima T."/>
            <person name="Furuno M."/>
            <person name="Futaki S."/>
            <person name="Gariboldi M."/>
            <person name="Georgii-Hemming P."/>
            <person name="Gingeras T.R."/>
            <person name="Gojobori T."/>
            <person name="Green R.E."/>
            <person name="Gustincich S."/>
            <person name="Harbers M."/>
            <person name="Hayashi Y."/>
            <person name="Hensch T.K."/>
            <person name="Hirokawa N."/>
            <person name="Hill D."/>
            <person name="Huminiecki L."/>
            <person name="Iacono M."/>
            <person name="Ikeo K."/>
            <person name="Iwama A."/>
            <person name="Ishikawa T."/>
            <person name="Jakt M."/>
            <person name="Kanapin A."/>
            <person name="Katoh M."/>
            <person name="Kawasawa Y."/>
            <person name="Kelso J."/>
            <person name="Kitamura H."/>
            <person name="Kitano H."/>
            <person name="Kollias G."/>
            <person name="Krishnan S.P."/>
            <person name="Kruger A."/>
            <person name="Kummerfeld S.K."/>
            <person name="Kurochkin I.V."/>
            <person name="Lareau L.F."/>
            <person name="Lazarevic D."/>
            <person name="Lipovich L."/>
            <person name="Liu J."/>
            <person name="Liuni S."/>
            <person name="McWilliam S."/>
            <person name="Madan Babu M."/>
            <person name="Madera M."/>
            <person name="Marchionni L."/>
            <person name="Matsuda H."/>
            <person name="Matsuzawa S."/>
            <person name="Miki H."/>
            <person name="Mignone F."/>
            <person name="Miyake S."/>
            <person name="Morris K."/>
            <person name="Mottagui-Tabar S."/>
            <person name="Mulder N."/>
            <person name="Nakano N."/>
            <person name="Nakauchi H."/>
            <person name="Ng P."/>
            <person name="Nilsson R."/>
            <person name="Nishiguchi S."/>
            <person name="Nishikawa S."/>
            <person name="Nori F."/>
            <person name="Ohara O."/>
            <person name="Okazaki Y."/>
            <person name="Orlando V."/>
            <person name="Pang K.C."/>
            <person name="Pavan W.J."/>
            <person name="Pavesi G."/>
            <person name="Pesole G."/>
            <person name="Petrovsky N."/>
            <person name="Piazza S."/>
            <person name="Reed J."/>
            <person name="Reid J.F."/>
            <person name="Ring B.Z."/>
            <person name="Ringwald M."/>
            <person name="Rost B."/>
            <person name="Ruan Y."/>
            <person name="Salzberg S.L."/>
            <person name="Sandelin A."/>
            <person name="Schneider C."/>
            <person name="Schoenbach C."/>
            <person name="Sekiguchi K."/>
            <person name="Semple C.A."/>
            <person name="Seno S."/>
            <person name="Sessa L."/>
            <person name="Sheng Y."/>
            <person name="Shibata Y."/>
            <person name="Shimada H."/>
            <person name="Shimada K."/>
            <person name="Silva D."/>
            <person name="Sinclair B."/>
            <person name="Sperling S."/>
            <person name="Stupka E."/>
            <person name="Sugiura K."/>
            <person name="Sultana R."/>
            <person name="Takenaka Y."/>
            <person name="Taki K."/>
            <person name="Tammoja K."/>
            <person name="Tan S.L."/>
            <person name="Tang S."/>
            <person name="Taylor M.S."/>
            <person name="Tegner J."/>
            <person name="Teichmann S.A."/>
            <person name="Ueda H.R."/>
            <person name="van Nimwegen E."/>
            <person name="Verardo R."/>
            <person name="Wei C.L."/>
            <person name="Yagi K."/>
            <person name="Yamanishi H."/>
            <person name="Zabarovsky E."/>
            <person name="Zhu S."/>
            <person name="Zimmer A."/>
            <person name="Hide W."/>
            <person name="Bult C."/>
            <person name="Grimmond S.M."/>
            <person name="Teasdale R.D."/>
            <person name="Liu E.T."/>
            <person name="Brusic V."/>
            <person name="Quackenbush J."/>
            <person name="Wahlestedt C."/>
            <person name="Mattick J.S."/>
            <person name="Hume D.A."/>
            <person name="Kai C."/>
            <person name="Sasaki D."/>
            <person name="Tomaru Y."/>
            <person name="Fukuda S."/>
            <person name="Kanamori-Katayama M."/>
            <person name="Suzuki M."/>
            <person name="Aoki J."/>
            <person name="Arakawa T."/>
            <person name="Iida J."/>
            <person name="Imamura K."/>
            <person name="Itoh M."/>
            <person name="Kato T."/>
            <person name="Kawaji H."/>
            <person name="Kawagashira N."/>
            <person name="Kawashima T."/>
            <person name="Kojima M."/>
            <person name="Kondo S."/>
            <person name="Konno H."/>
            <person name="Nakano K."/>
            <person name="Ninomiya N."/>
            <person name="Nishio T."/>
            <person name="Okada M."/>
            <person name="Plessy C."/>
            <person name="Shibata K."/>
            <person name="Shiraki T."/>
            <person name="Suzuki S."/>
            <person name="Tagami M."/>
            <person name="Waki K."/>
            <person name="Watahiki A."/>
            <person name="Okamura-Oho Y."/>
            <person name="Suzuki H."/>
            <person name="Kawai J."/>
            <person name="Hayashizaki Y."/>
        </authorList>
    </citation>
    <scope>NUCLEOTIDE SEQUENCE [LARGE SCALE MRNA]</scope>
    <source>
        <strain>C57BL/6J</strain>
    </source>
</reference>
<reference key="3">
    <citation type="journal article" date="2004" name="Genome Res.">
        <title>The status, quality, and expansion of the NIH full-length cDNA project: the Mammalian Gene Collection (MGC).</title>
        <authorList>
            <consortium name="The MGC Project Team"/>
        </authorList>
    </citation>
    <scope>NUCLEOTIDE SEQUENCE [LARGE SCALE MRNA]</scope>
</reference>
<keyword id="KW-0256">Endoplasmic reticulum</keyword>
<keyword id="KW-0472">Membrane</keyword>
<keyword id="KW-0653">Protein transport</keyword>
<keyword id="KW-1185">Reference proteome</keyword>
<keyword id="KW-0811">Translocation</keyword>
<keyword id="KW-0812">Transmembrane</keyword>
<keyword id="KW-1133">Transmembrane helix</keyword>
<keyword id="KW-0813">Transport</keyword>
<comment type="function">
    <text evidence="2">Component of SEC61 channel-forming translocon complex that mediates transport of signal peptide-containing precursor polypeptides across the endoplasmic reticulum (ER). Forms a ribosome receptor and a gated pore in the ER membrane, both functions required for cotranslational translocation of nascent polypeptides.</text>
</comment>
<comment type="subunit">
    <text evidence="1">The SEC61 channel-forming translocon complex consists of channel-forming core components SEC61A1, SEC61B and SEC61G and different auxiliary components such as SEC62 and SEC63.</text>
</comment>
<comment type="subcellular location">
    <subcellularLocation>
        <location evidence="2">Endoplasmic reticulum membrane</location>
        <topology evidence="3">Multi-pass membrane protein</topology>
    </subcellularLocation>
</comment>
<comment type="similarity">
    <text evidence="4">Belongs to the SecY/SEC61-alpha family.</text>
</comment>